<comment type="function">
    <text>Together with an NADPH cytochrome P450 the enzyme system catalyzes the terminal hydroxylation as the first step in the assimilation of alkanes and fatty acids.</text>
</comment>
<comment type="cofactor">
    <cofactor evidence="1">
        <name>heme</name>
        <dbReference type="ChEBI" id="CHEBI:30413"/>
    </cofactor>
</comment>
<comment type="subcellular location">
    <subcellularLocation>
        <location evidence="2">Membrane</location>
    </subcellularLocation>
</comment>
<comment type="induction">
    <text>By N-alkanes.</text>
</comment>
<comment type="similarity">
    <text evidence="2">Belongs to the cytochrome P450 family.</text>
</comment>
<keyword id="KW-0349">Heme</keyword>
<keyword id="KW-0408">Iron</keyword>
<keyword id="KW-0472">Membrane</keyword>
<keyword id="KW-0479">Metal-binding</keyword>
<keyword id="KW-0503">Monooxygenase</keyword>
<keyword id="KW-0560">Oxidoreductase</keyword>
<proteinExistence type="evidence at protein level"/>
<evidence type="ECO:0000250" key="1"/>
<evidence type="ECO:0000305" key="2"/>
<sequence length="521" mass="59872">MIDEILPKLVQYWYIVLPTLLIIKHVVSYINTQRLMRKFRAKPVTNVLNDGFFGIPNGIKAIKEKNKGRAQEYNDEKFAAGPKPKVGTYLFKLFTKDVLVTKDPENIKAILATQFEDFSLGKRLDFFKPLLGYGIFTLDGEGWKHSRAMLRPQFAREQVGHVKLIEPHFQSLKKHIIKNKGQFFDIQELFFRFTVDSATEFLFGESVESLKDESIGYDQQDFDFDGRKNFAEAFNKAQEYLGTRAILQLFYWLVNGADFKKSVAEVHKFTDYYVQKALDATPEELEKHSGYIFLYELVQQTRDPKVLRDQSLNILLAGRDTTAGLLSFALFELARNPEVWSRLREEIGDKFGLDEDATIEGISFESLKQCEYLKAVVNECLRMYPSVPRNFRIATKHTTLPRGGGPDGKDPIFIKKGAVVSYGINSTHLDPMYYGPDARLFNPDRWSKPETKKLGWAFLPFNGGPRICLGQQFALTEASYVLVRMIQNFKELELTPNTVYPPRRLTNLTMSLYDGAYIKVN</sequence>
<accession>Q12586</accession>
<name>CP52I_CANMA</name>
<dbReference type="EC" id="1.14.14.-"/>
<dbReference type="EMBL" id="D12717">
    <property type="protein sequence ID" value="BAA02211.1"/>
    <property type="molecule type" value="Genomic_DNA"/>
</dbReference>
<dbReference type="PIR" id="JS0723">
    <property type="entry name" value="JS0723"/>
</dbReference>
<dbReference type="SMR" id="Q12586"/>
<dbReference type="GO" id="GO:0016020">
    <property type="term" value="C:membrane"/>
    <property type="evidence" value="ECO:0007669"/>
    <property type="project" value="UniProtKB-SubCell"/>
</dbReference>
<dbReference type="GO" id="GO:0020037">
    <property type="term" value="F:heme binding"/>
    <property type="evidence" value="ECO:0007669"/>
    <property type="project" value="InterPro"/>
</dbReference>
<dbReference type="GO" id="GO:0005506">
    <property type="term" value="F:iron ion binding"/>
    <property type="evidence" value="ECO:0007669"/>
    <property type="project" value="InterPro"/>
</dbReference>
<dbReference type="GO" id="GO:0016712">
    <property type="term" value="F:oxidoreductase activity, acting on paired donors, with incorporation or reduction of molecular oxygen, reduced flavin or flavoprotein as one donor, and incorporation of one atom of oxygen"/>
    <property type="evidence" value="ECO:0007669"/>
    <property type="project" value="InterPro"/>
</dbReference>
<dbReference type="CDD" id="cd11063">
    <property type="entry name" value="CYP52"/>
    <property type="match status" value="1"/>
</dbReference>
<dbReference type="Gene3D" id="1.10.630.10">
    <property type="entry name" value="Cytochrome P450"/>
    <property type="match status" value="1"/>
</dbReference>
<dbReference type="InterPro" id="IPR001128">
    <property type="entry name" value="Cyt_P450"/>
</dbReference>
<dbReference type="InterPro" id="IPR017972">
    <property type="entry name" value="Cyt_P450_CS"/>
</dbReference>
<dbReference type="InterPro" id="IPR002974">
    <property type="entry name" value="Cyt_P450_E_CYP52_ascomycetes"/>
</dbReference>
<dbReference type="InterPro" id="IPR047146">
    <property type="entry name" value="Cyt_P450_E_CYP52_fungi"/>
</dbReference>
<dbReference type="InterPro" id="IPR002402">
    <property type="entry name" value="Cyt_P450_E_grp-II"/>
</dbReference>
<dbReference type="InterPro" id="IPR036396">
    <property type="entry name" value="Cyt_P450_sf"/>
</dbReference>
<dbReference type="PANTHER" id="PTHR24287">
    <property type="entry name" value="P450, PUTATIVE (EUROFUNG)-RELATED"/>
    <property type="match status" value="1"/>
</dbReference>
<dbReference type="PANTHER" id="PTHR24287:SF1">
    <property type="entry name" value="P450, PUTATIVE (EUROFUNG)-RELATED"/>
    <property type="match status" value="1"/>
</dbReference>
<dbReference type="Pfam" id="PF00067">
    <property type="entry name" value="p450"/>
    <property type="match status" value="1"/>
</dbReference>
<dbReference type="PRINTS" id="PR00464">
    <property type="entry name" value="EP450II"/>
</dbReference>
<dbReference type="PRINTS" id="PR01239">
    <property type="entry name" value="EP450IICYP52"/>
</dbReference>
<dbReference type="PRINTS" id="PR00385">
    <property type="entry name" value="P450"/>
</dbReference>
<dbReference type="SUPFAM" id="SSF48264">
    <property type="entry name" value="Cytochrome P450"/>
    <property type="match status" value="1"/>
</dbReference>
<dbReference type="PROSITE" id="PS00086">
    <property type="entry name" value="CYTOCHROME_P450"/>
    <property type="match status" value="1"/>
</dbReference>
<gene>
    <name type="primary">CYP52A9</name>
</gene>
<organism>
    <name type="scientific">Candida maltosa</name>
    <name type="common">Yeast</name>
    <dbReference type="NCBI Taxonomy" id="5479"/>
    <lineage>
        <taxon>Eukaryota</taxon>
        <taxon>Fungi</taxon>
        <taxon>Dikarya</taxon>
        <taxon>Ascomycota</taxon>
        <taxon>Saccharomycotina</taxon>
        <taxon>Pichiomycetes</taxon>
        <taxon>Debaryomycetaceae</taxon>
        <taxon>Candida/Lodderomyces clade</taxon>
        <taxon>Candida</taxon>
    </lineage>
</organism>
<protein>
    <recommendedName>
        <fullName>Cytochrome P450 52A9</fullName>
        <ecNumber>1.14.14.-</ecNumber>
    </recommendedName>
    <alternativeName>
        <fullName>Alkane-inducible P450-ALK5-A</fullName>
    </alternativeName>
    <alternativeName>
        <fullName>CYPLIIA9</fullName>
    </alternativeName>
</protein>
<feature type="chain" id="PRO_0000052027" description="Cytochrome P450 52A9">
    <location>
        <begin position="1"/>
        <end position="521"/>
    </location>
</feature>
<feature type="binding site" description="axial binding residue" evidence="1">
    <location>
        <position position="468"/>
    </location>
    <ligand>
        <name>heme</name>
        <dbReference type="ChEBI" id="CHEBI:30413"/>
    </ligand>
    <ligandPart>
        <name>Fe</name>
        <dbReference type="ChEBI" id="CHEBI:18248"/>
    </ligandPart>
</feature>
<reference key="1">
    <citation type="journal article" date="1995" name="DNA Cell Biol.">
        <title>CYP52 (cytochrome P450alk) multigene family in Candida maltosa: identification and characterization of eight members.</title>
        <authorList>
            <person name="Ohkuma M."/>
            <person name="Muraoka S."/>
            <person name="Tanimoto T."/>
            <person name="Fujii M."/>
            <person name="Ohta A."/>
            <person name="Takagi M."/>
        </authorList>
    </citation>
    <scope>NUCLEOTIDE SEQUENCE [GENOMIC DNA]</scope>
    <source>
        <strain>ATCC 28140 / CBS 5611 / IAM 12247 / JCM 1504 / NBRC 1977</strain>
    </source>
</reference>
<reference key="2">
    <citation type="journal article" date="1996" name="Biochem. Biophys. Res. Commun.">
        <title>The CYP52 multigene family of Candida maltosa encodes functionally diverse n-alkane-inducible cytochromes P450.</title>
        <authorList>
            <person name="Zimmer T."/>
            <person name="Ohkuma M."/>
            <person name="Ohta A."/>
            <person name="Takagi M."/>
            <person name="Schunck W.H."/>
        </authorList>
    </citation>
    <scope>CHARACTERIZATION</scope>
</reference>